<proteinExistence type="inferred from homology"/>
<accession>P64051</accession>
<accession>Q9JRH4</accession>
<evidence type="ECO:0000255" key="1">
    <source>
        <dbReference type="HAMAP-Rule" id="MF_00050"/>
    </source>
</evidence>
<organism>
    <name type="scientific">Neisseria meningitidis serogroup B (strain ATCC BAA-335 / MC58)</name>
    <dbReference type="NCBI Taxonomy" id="122586"/>
    <lineage>
        <taxon>Bacteria</taxon>
        <taxon>Pseudomonadati</taxon>
        <taxon>Pseudomonadota</taxon>
        <taxon>Betaproteobacteria</taxon>
        <taxon>Neisseriales</taxon>
        <taxon>Neisseriaceae</taxon>
        <taxon>Neisseria</taxon>
    </lineage>
</organism>
<dbReference type="EMBL" id="AE002098">
    <property type="protein sequence ID" value="AAF42419.1"/>
    <property type="molecule type" value="Genomic_DNA"/>
</dbReference>
<dbReference type="PIR" id="G81006">
    <property type="entry name" value="G81006"/>
</dbReference>
<dbReference type="RefSeq" id="NP_275090.1">
    <property type="nucleotide sequence ID" value="NC_003112.2"/>
</dbReference>
<dbReference type="RefSeq" id="WP_002218222.1">
    <property type="nucleotide sequence ID" value="NC_003112.2"/>
</dbReference>
<dbReference type="SMR" id="P64051"/>
<dbReference type="FunCoup" id="P64051">
    <property type="interactions" value="513"/>
</dbReference>
<dbReference type="STRING" id="122586.NMB2102"/>
<dbReference type="PaxDb" id="122586-NMB2102"/>
<dbReference type="KEGG" id="nme:NMB2102"/>
<dbReference type="PATRIC" id="fig|122586.8.peg.2684"/>
<dbReference type="HOGENOM" id="CLU_047155_0_2_4"/>
<dbReference type="InParanoid" id="P64051"/>
<dbReference type="OrthoDB" id="9808348at2"/>
<dbReference type="Proteomes" id="UP000000425">
    <property type="component" value="Chromosome"/>
</dbReference>
<dbReference type="GO" id="GO:0005737">
    <property type="term" value="C:cytoplasm"/>
    <property type="evidence" value="ECO:0007669"/>
    <property type="project" value="UniProtKB-SubCell"/>
</dbReference>
<dbReference type="GO" id="GO:0003746">
    <property type="term" value="F:translation elongation factor activity"/>
    <property type="evidence" value="ECO:0000318"/>
    <property type="project" value="GO_Central"/>
</dbReference>
<dbReference type="GO" id="GO:0006414">
    <property type="term" value="P:translational elongation"/>
    <property type="evidence" value="ECO:0000318"/>
    <property type="project" value="GO_Central"/>
</dbReference>
<dbReference type="CDD" id="cd14275">
    <property type="entry name" value="UBA_EF-Ts"/>
    <property type="match status" value="1"/>
</dbReference>
<dbReference type="FunFam" id="1.10.286.20:FF:000001">
    <property type="entry name" value="Elongation factor Ts"/>
    <property type="match status" value="1"/>
</dbReference>
<dbReference type="FunFam" id="1.10.8.10:FF:000001">
    <property type="entry name" value="Elongation factor Ts"/>
    <property type="match status" value="1"/>
</dbReference>
<dbReference type="FunFam" id="3.30.479.20:FF:000001">
    <property type="entry name" value="Elongation factor Ts"/>
    <property type="match status" value="1"/>
</dbReference>
<dbReference type="Gene3D" id="1.10.286.20">
    <property type="match status" value="1"/>
</dbReference>
<dbReference type="Gene3D" id="1.10.8.10">
    <property type="entry name" value="DNA helicase RuvA subunit, C-terminal domain"/>
    <property type="match status" value="1"/>
</dbReference>
<dbReference type="Gene3D" id="3.30.479.20">
    <property type="entry name" value="Elongation factor Ts, dimerisation domain"/>
    <property type="match status" value="2"/>
</dbReference>
<dbReference type="HAMAP" id="MF_00050">
    <property type="entry name" value="EF_Ts"/>
    <property type="match status" value="1"/>
</dbReference>
<dbReference type="InterPro" id="IPR036402">
    <property type="entry name" value="EF-Ts_dimer_sf"/>
</dbReference>
<dbReference type="InterPro" id="IPR001816">
    <property type="entry name" value="Transl_elong_EFTs/EF1B"/>
</dbReference>
<dbReference type="InterPro" id="IPR014039">
    <property type="entry name" value="Transl_elong_EFTs/EF1B_dimer"/>
</dbReference>
<dbReference type="InterPro" id="IPR018101">
    <property type="entry name" value="Transl_elong_Ts_CS"/>
</dbReference>
<dbReference type="InterPro" id="IPR009060">
    <property type="entry name" value="UBA-like_sf"/>
</dbReference>
<dbReference type="NCBIfam" id="TIGR00116">
    <property type="entry name" value="tsf"/>
    <property type="match status" value="1"/>
</dbReference>
<dbReference type="PANTHER" id="PTHR11741">
    <property type="entry name" value="ELONGATION FACTOR TS"/>
    <property type="match status" value="1"/>
</dbReference>
<dbReference type="PANTHER" id="PTHR11741:SF0">
    <property type="entry name" value="ELONGATION FACTOR TS, MITOCHONDRIAL"/>
    <property type="match status" value="1"/>
</dbReference>
<dbReference type="Pfam" id="PF00889">
    <property type="entry name" value="EF_TS"/>
    <property type="match status" value="1"/>
</dbReference>
<dbReference type="SUPFAM" id="SSF54713">
    <property type="entry name" value="Elongation factor Ts (EF-Ts), dimerisation domain"/>
    <property type="match status" value="2"/>
</dbReference>
<dbReference type="SUPFAM" id="SSF46934">
    <property type="entry name" value="UBA-like"/>
    <property type="match status" value="1"/>
</dbReference>
<dbReference type="PROSITE" id="PS01126">
    <property type="entry name" value="EF_TS_1"/>
    <property type="match status" value="1"/>
</dbReference>
<dbReference type="PROSITE" id="PS01127">
    <property type="entry name" value="EF_TS_2"/>
    <property type="match status" value="1"/>
</dbReference>
<keyword id="KW-0963">Cytoplasm</keyword>
<keyword id="KW-0251">Elongation factor</keyword>
<keyword id="KW-0648">Protein biosynthesis</keyword>
<keyword id="KW-1185">Reference proteome</keyword>
<sequence length="284" mass="30330">MAEITAKMVADLRAATGLGMMECKKALVEAEGNFDKAEEILRIKSGAKAGKLAGRTAAEGVLAYAINGNVGALVEVNCETDFVAKDAGFVEFANFVAKTAAEKKPASVEELSELVEAERKAIIAKLGENMSVRRFQVIDTANQLVAYIHGALATEGVLVEYKGSEDVARKIGMHIVAAKPQCVSEAEVDAETVEKERHIYTEQAIASGKPADIAAKMVEGRIRKFLAEITLNGQAFVMNPDQTVAQFSKENGTEVISFVRYKVGDGIEKKAVDYAAEVAAAAKV</sequence>
<gene>
    <name evidence="1" type="primary">tsf</name>
    <name type="ordered locus">NMB2102</name>
</gene>
<name>EFTS_NEIMB</name>
<protein>
    <recommendedName>
        <fullName evidence="1">Elongation factor Ts</fullName>
        <shortName evidence="1">EF-Ts</shortName>
    </recommendedName>
</protein>
<reference key="1">
    <citation type="journal article" date="2000" name="Science">
        <title>Complete genome sequence of Neisseria meningitidis serogroup B strain MC58.</title>
        <authorList>
            <person name="Tettelin H."/>
            <person name="Saunders N.J."/>
            <person name="Heidelberg J.F."/>
            <person name="Jeffries A.C."/>
            <person name="Nelson K.E."/>
            <person name="Eisen J.A."/>
            <person name="Ketchum K.A."/>
            <person name="Hood D.W."/>
            <person name="Peden J.F."/>
            <person name="Dodson R.J."/>
            <person name="Nelson W.C."/>
            <person name="Gwinn M.L."/>
            <person name="DeBoy R.T."/>
            <person name="Peterson J.D."/>
            <person name="Hickey E.K."/>
            <person name="Haft D.H."/>
            <person name="Salzberg S.L."/>
            <person name="White O."/>
            <person name="Fleischmann R.D."/>
            <person name="Dougherty B.A."/>
            <person name="Mason T.M."/>
            <person name="Ciecko A."/>
            <person name="Parksey D.S."/>
            <person name="Blair E."/>
            <person name="Cittone H."/>
            <person name="Clark E.B."/>
            <person name="Cotton M.D."/>
            <person name="Utterback T.R."/>
            <person name="Khouri H.M."/>
            <person name="Qin H."/>
            <person name="Vamathevan J.J."/>
            <person name="Gill J."/>
            <person name="Scarlato V."/>
            <person name="Masignani V."/>
            <person name="Pizza M."/>
            <person name="Grandi G."/>
            <person name="Sun L."/>
            <person name="Smith H.O."/>
            <person name="Fraser C.M."/>
            <person name="Moxon E.R."/>
            <person name="Rappuoli R."/>
            <person name="Venter J.C."/>
        </authorList>
    </citation>
    <scope>NUCLEOTIDE SEQUENCE [LARGE SCALE GENOMIC DNA]</scope>
    <source>
        <strain>ATCC BAA-335 / MC58</strain>
    </source>
</reference>
<comment type="function">
    <text evidence="1">Associates with the EF-Tu.GDP complex and induces the exchange of GDP to GTP. It remains bound to the aminoacyl-tRNA.EF-Tu.GTP complex up to the GTP hydrolysis stage on the ribosome.</text>
</comment>
<comment type="subcellular location">
    <subcellularLocation>
        <location evidence="1">Cytoplasm</location>
    </subcellularLocation>
</comment>
<comment type="similarity">
    <text evidence="1">Belongs to the EF-Ts family.</text>
</comment>
<feature type="chain" id="PRO_0000161162" description="Elongation factor Ts">
    <location>
        <begin position="1"/>
        <end position="284"/>
    </location>
</feature>
<feature type="region of interest" description="Involved in Mg(2+) ion dislocation from EF-Tu" evidence="1">
    <location>
        <begin position="80"/>
        <end position="83"/>
    </location>
</feature>